<keyword id="KW-0046">Antibiotic resistance</keyword>
<keyword id="KW-0050">Antiport</keyword>
<keyword id="KW-0997">Cell inner membrane</keyword>
<keyword id="KW-1003">Cell membrane</keyword>
<keyword id="KW-0375">Hydrogen ion transport</keyword>
<keyword id="KW-0406">Ion transport</keyword>
<keyword id="KW-0472">Membrane</keyword>
<keyword id="KW-0614">Plasmid</keyword>
<keyword id="KW-0812">Transmembrane</keyword>
<keyword id="KW-1133">Transmembrane helix</keyword>
<keyword id="KW-0813">Transport</keyword>
<name>TCR3_ECOLX</name>
<proteinExistence type="evidence at protein level"/>
<accession>P02981</accession>
<sequence>MKSNNALIVILGTVTLDAVGIGLVMPVLPGLLRDIVHSDSIASHYGVLLALYALMQFLCAPVLGALSDRFGRRPVLLASLLGATIDYAIMATTPVLWILYAGRIVAGITGATGAVAGAYIADITDGEDRARHFGLMSACFGVGMVAGPVAGGLLGAISLHAPFLAAAVLNGLNLLLGCFLMQESHKGERRPMPLRAFNPVSSFRWARGMTIVAALMTVFFIMQLVGQVPAALWVIFGEDRFRWSATMIGLSLAVFGILHALAQAFVTGPATKRFGEKQAIIAGMAADALGYVLLAFATRGWMAFPIMILLASGGIGMPALQAMLSRQVDDDHQGQLQGSLAALTSLTSITGPLIVTAIYAASASTWNGLAWIVGAALYLVCLPALRRGAWSRATST</sequence>
<organism>
    <name type="scientific">Escherichia coli</name>
    <dbReference type="NCBI Taxonomy" id="562"/>
    <lineage>
        <taxon>Bacteria</taxon>
        <taxon>Pseudomonadati</taxon>
        <taxon>Pseudomonadota</taxon>
        <taxon>Gammaproteobacteria</taxon>
        <taxon>Enterobacterales</taxon>
        <taxon>Enterobacteriaceae</taxon>
        <taxon>Escherichia</taxon>
    </lineage>
</organism>
<comment type="function">
    <text>Resistance to tetracycline by an active tetracycline efflux. This is an energy-dependent process that decreases the accumulation of the antibiotic in whole cells. This protein functions as a metal-tetracycline/H(+) antiporter.</text>
</comment>
<comment type="subcellular location">
    <subcellularLocation>
        <location>Cell inner membrane</location>
        <topology>Multi-pass membrane protein</topology>
    </subcellularLocation>
</comment>
<comment type="biotechnology">
    <text>This protein is used as a marker in many commonly used cloning vectors, such as pBR322 and pACYC184.</text>
</comment>
<comment type="similarity">
    <text evidence="1">Belongs to the major facilitator superfamily. TCR/Tet family.</text>
</comment>
<geneLocation type="plasmid">
    <name>pSC101</name>
</geneLocation>
<protein>
    <recommendedName>
        <fullName>Tetracycline resistance protein, class C</fullName>
        <shortName>TetA(C)</shortName>
    </recommendedName>
</protein>
<gene>
    <name type="primary">tetA</name>
</gene>
<evidence type="ECO:0000305" key="1"/>
<evidence type="ECO:0000305" key="2">
    <source>
    </source>
</evidence>
<feature type="chain" id="PRO_0000173394" description="Tetracycline resistance protein, class C">
    <location>
        <begin position="1"/>
        <end position="396"/>
    </location>
</feature>
<feature type="topological domain" description="Cytoplasmic" evidence="2">
    <location>
        <begin position="1"/>
        <end position="6"/>
    </location>
</feature>
<feature type="transmembrane region" description="Helical" evidence="1">
    <location>
        <begin position="7"/>
        <end position="27"/>
    </location>
</feature>
<feature type="topological domain" description="Periplasmic" evidence="2">
    <location>
        <begin position="28"/>
        <end position="45"/>
    </location>
</feature>
<feature type="transmembrane region" description="Helical" evidence="1">
    <location>
        <begin position="46"/>
        <end position="66"/>
    </location>
</feature>
<feature type="topological domain" description="Cytoplasmic" evidence="2">
    <location>
        <begin position="67"/>
        <end position="79"/>
    </location>
</feature>
<feature type="transmembrane region" description="Helical" evidence="1">
    <location>
        <begin position="80"/>
        <end position="100"/>
    </location>
</feature>
<feature type="topological domain" description="Periplasmic" evidence="2">
    <location>
        <begin position="101"/>
        <end position="103"/>
    </location>
</feature>
<feature type="transmembrane region" description="Helical" evidence="1">
    <location>
        <begin position="104"/>
        <end position="124"/>
    </location>
</feature>
<feature type="topological domain" description="Cytoplasmic" evidence="2">
    <location>
        <begin position="125"/>
        <end position="138"/>
    </location>
</feature>
<feature type="transmembrane region" description="Helical" evidence="1">
    <location>
        <begin position="139"/>
        <end position="159"/>
    </location>
</feature>
<feature type="topological domain" description="Periplasmic" evidence="2">
    <location>
        <position position="160"/>
    </location>
</feature>
<feature type="transmembrane region" description="Helical" evidence="1">
    <location>
        <begin position="161"/>
        <end position="181"/>
    </location>
</feature>
<feature type="topological domain" description="Cytoplasmic" evidence="2">
    <location>
        <begin position="182"/>
        <end position="210"/>
    </location>
</feature>
<feature type="transmembrane region" description="Helical" evidence="1">
    <location>
        <begin position="211"/>
        <end position="231"/>
    </location>
</feature>
<feature type="topological domain" description="Periplasmic" evidence="2">
    <location>
        <begin position="232"/>
        <end position="246"/>
    </location>
</feature>
<feature type="transmembrane region" description="Helical" evidence="1">
    <location>
        <begin position="247"/>
        <end position="267"/>
    </location>
</feature>
<feature type="topological domain" description="Cytoplasmic" evidence="2">
    <location>
        <begin position="268"/>
        <end position="277"/>
    </location>
</feature>
<feature type="transmembrane region" description="Helical" evidence="1">
    <location>
        <begin position="278"/>
        <end position="298"/>
    </location>
</feature>
<feature type="topological domain" description="Periplasmic" evidence="2">
    <location>
        <position position="299"/>
    </location>
</feature>
<feature type="transmembrane region" description="Helical" evidence="1">
    <location>
        <begin position="300"/>
        <end position="320"/>
    </location>
</feature>
<feature type="topological domain" description="Cytoplasmic" evidence="2">
    <location>
        <begin position="321"/>
        <end position="339"/>
    </location>
</feature>
<feature type="transmembrane region" description="Helical" evidence="1">
    <location>
        <begin position="340"/>
        <end position="360"/>
    </location>
</feature>
<feature type="topological domain" description="Periplasmic" evidence="2">
    <location>
        <begin position="361"/>
        <end position="364"/>
    </location>
</feature>
<feature type="transmembrane region" description="Helical" evidence="1">
    <location>
        <begin position="365"/>
        <end position="385"/>
    </location>
</feature>
<feature type="topological domain" description="Cytoplasmic" evidence="2">
    <location>
        <begin position="386"/>
        <end position="396"/>
    </location>
</feature>
<reference key="1">
    <citation type="journal article" date="1979" name="Cold Spring Harb. Symp. Quant. Biol.">
        <title>Complete nucleotide sequence of the Escherichia coli plasmid pBR322.</title>
        <authorList>
            <person name="Sutcliffe J.G."/>
        </authorList>
    </citation>
    <scope>NUCLEOTIDE SEQUENCE [GENOMIC DNA]</scope>
</reference>
<reference key="2">
    <citation type="journal article" date="1983" name="Proc. Natl. Acad. Sci. U.S.A.">
        <title>Directed mutagenesis method for analysis of mutagen specificity: application to ultraviolet-induced mutagenesis.</title>
        <authorList>
            <person name="Livneh Z."/>
        </authorList>
    </citation>
    <scope>SEQUENCE REVISION</scope>
    <scope>IDENTIFICATION OF PROTEIN</scope>
</reference>
<reference key="3">
    <citation type="journal article" date="1983" name="Gene">
        <title>Revised sequence of the tetracycline-resistance gene of pBR322.</title>
        <authorList>
            <person name="Peden K.W.C."/>
        </authorList>
    </citation>
    <scope>SEQUENCE REVISION</scope>
    <scope>IDENTIFICATION OF PROTEIN</scope>
</reference>
<reference key="4">
    <citation type="journal article" date="1992" name="J. Biol. Chem.">
        <title>Membrane topology of the pBR322 tetracycline resistance protein. TetA-PhoA gene fusions and implications for the mechanism of TetA membrane insertion.</title>
        <authorList>
            <person name="Allard J.D."/>
            <person name="Bertrand K.P."/>
        </authorList>
    </citation>
    <scope>TOPOLOGY</scope>
</reference>
<dbReference type="EMBL" id="J01749">
    <property type="protein sequence ID" value="AAB59735.1"/>
    <property type="molecule type" value="Genomic_DNA"/>
</dbReference>
<dbReference type="PIR" id="B90923">
    <property type="entry name" value="YTEC32"/>
</dbReference>
<dbReference type="SMR" id="P02981"/>
<dbReference type="TCDB" id="2.A.1.2.102">
    <property type="family name" value="the major facilitator superfamily (mfs)"/>
</dbReference>
<dbReference type="GO" id="GO:0005886">
    <property type="term" value="C:plasma membrane"/>
    <property type="evidence" value="ECO:0007669"/>
    <property type="project" value="UniProtKB-SubCell"/>
</dbReference>
<dbReference type="GO" id="GO:0015297">
    <property type="term" value="F:antiporter activity"/>
    <property type="evidence" value="ECO:0007669"/>
    <property type="project" value="UniProtKB-KW"/>
</dbReference>
<dbReference type="GO" id="GO:1902600">
    <property type="term" value="P:proton transmembrane transport"/>
    <property type="evidence" value="ECO:0007669"/>
    <property type="project" value="UniProtKB-KW"/>
</dbReference>
<dbReference type="GO" id="GO:0046677">
    <property type="term" value="P:response to antibiotic"/>
    <property type="evidence" value="ECO:0007669"/>
    <property type="project" value="UniProtKB-KW"/>
</dbReference>
<dbReference type="CDD" id="cd17388">
    <property type="entry name" value="MFS_TetA"/>
    <property type="match status" value="1"/>
</dbReference>
<dbReference type="Gene3D" id="1.20.1250.20">
    <property type="entry name" value="MFS general substrate transporter like domains"/>
    <property type="match status" value="1"/>
</dbReference>
<dbReference type="InterPro" id="IPR011701">
    <property type="entry name" value="MFS"/>
</dbReference>
<dbReference type="InterPro" id="IPR020846">
    <property type="entry name" value="MFS_dom"/>
</dbReference>
<dbReference type="InterPro" id="IPR036259">
    <property type="entry name" value="MFS_trans_sf"/>
</dbReference>
<dbReference type="InterPro" id="IPR005829">
    <property type="entry name" value="Sugar_transporter_CS"/>
</dbReference>
<dbReference type="InterPro" id="IPR001958">
    <property type="entry name" value="Tet-R_TetA/multi-R_MdtG-like"/>
</dbReference>
<dbReference type="NCBIfam" id="NF012174">
    <property type="entry name" value="tet_MFS_A_B_C_D"/>
    <property type="match status" value="1"/>
</dbReference>
<dbReference type="NCBIfam" id="NF012191">
    <property type="entry name" value="tet_MFS_C"/>
    <property type="match status" value="1"/>
</dbReference>
<dbReference type="PANTHER" id="PTHR23507:SF1">
    <property type="entry name" value="FI18259P1-RELATED"/>
    <property type="match status" value="1"/>
</dbReference>
<dbReference type="PANTHER" id="PTHR23507">
    <property type="entry name" value="ZGC:174356"/>
    <property type="match status" value="1"/>
</dbReference>
<dbReference type="Pfam" id="PF07690">
    <property type="entry name" value="MFS_1"/>
    <property type="match status" value="1"/>
</dbReference>
<dbReference type="PRINTS" id="PR01035">
    <property type="entry name" value="TCRTETA"/>
</dbReference>
<dbReference type="SUPFAM" id="SSF103473">
    <property type="entry name" value="MFS general substrate transporter"/>
    <property type="match status" value="1"/>
</dbReference>
<dbReference type="PROSITE" id="PS50850">
    <property type="entry name" value="MFS"/>
    <property type="match status" value="1"/>
</dbReference>
<dbReference type="PROSITE" id="PS00216">
    <property type="entry name" value="SUGAR_TRANSPORT_1"/>
    <property type="match status" value="1"/>
</dbReference>